<comment type="function">
    <text evidence="1 4">O-methyltransferase; part of the gene cluster that mediates the biosynthesis of physcion, a natural anthraquinone fungicide that can prevent plant fungal infections (PubMed:36648527). Within the pathway, the O-methyltransferase AcOMT catalyzes the last step by transferring a methyl group to C-6 hydroxyl of emodin to form physcion (PubMed:36648527). AcOMT may also methylate the C-6 hydroxyl group of emodin anthrone to produce physcion-anthrone B (PubMed:36648527). The pathway begins with the polyketide synthase AcPKS that condenses 8 malonyl-CoA units to synthesize atrochrysone thioester which is released from the synthase by the atrochrysone carboxyl ACP thioesterase AcTE that breaks the thioester bond and leads to free atrochrysone carboxylic acid. Spontaneous decarboxylation of atrochrysone carboxylic acid leads to the formation of atrochrysone. Then, atrochrysone undergoes spontaneous dehydration and oxidation, giving the products emodin anthrone and emodin. The O-methyltransferase AcOMT then methylates the C-6 hydroxyl of emodin to form physcion (Probable).</text>
</comment>
<comment type="catalytic activity">
    <reaction evidence="1">
        <text>emodin + S-adenosyl-L-methionine = physcion + S-adenosyl-L-homocysteine</text>
        <dbReference type="Rhea" id="RHEA:76767"/>
        <dbReference type="ChEBI" id="CHEBI:38167"/>
        <dbReference type="ChEBI" id="CHEBI:57856"/>
        <dbReference type="ChEBI" id="CHEBI:59789"/>
        <dbReference type="ChEBI" id="CHEBI:77659"/>
    </reaction>
    <physiologicalReaction direction="left-to-right" evidence="1">
        <dbReference type="Rhea" id="RHEA:76768"/>
    </physiologicalReaction>
</comment>
<comment type="pathway">
    <text evidence="1">Secondary metabolite biosynthesis.</text>
</comment>
<comment type="similarity">
    <text evidence="3">Belongs to the methyltransferase superfamily.</text>
</comment>
<sequence>MPKLTPTERGIAIYNPLVLQIYDYWVLNIVNTWAWRCPTKTHLLPLFVSNIGSNHLDIGVGTGYYLANGTIPQTTRLTLCDLSPTAMAKAKARAGREDARELLCDVLKPLPVRAGEKFDSVSMYFLLHCLPGPVGNKICVFEHVKGVLKEDGVVTGATVLGKGVKDNFFGGLIRRFCVYDGIMSNETDDVESFVEALKANFEVVEVDVIGVVLVFKAMKPKL</sequence>
<evidence type="ECO:0000269" key="1">
    <source>
    </source>
</evidence>
<evidence type="ECO:0000303" key="2">
    <source>
    </source>
</evidence>
<evidence type="ECO:0000305" key="3"/>
<evidence type="ECO:0000305" key="4">
    <source>
    </source>
</evidence>
<feature type="chain" id="PRO_0000459057" description="Physcion biosynthesis cluster O-methyltransferase">
    <location>
        <begin position="1"/>
        <end position="222"/>
    </location>
</feature>
<accession>A0A7R7ZLE4</accession>
<gene>
    <name evidence="2" type="primary">AcOMT</name>
    <name type="ORF">ACHE_20977A</name>
</gene>
<reference key="1">
    <citation type="journal article" date="2021" name="Microbiol. Resour. Announc.">
        <title>Chromosome-Level genome sequence of Aspergillus chevalieri M1, isolated from katsuobushi.</title>
        <authorList>
            <person name="Kadooka C."/>
            <person name="Mori K."/>
            <person name="Okutsu K."/>
            <person name="Yoshizaki Y."/>
            <person name="Takamine K."/>
            <person name="Tashiro K."/>
            <person name="Tamaki H."/>
            <person name="Futagami T."/>
        </authorList>
    </citation>
    <scope>NUCLEOTIDE SEQUENCE [LARGE SCALE GENOMIC DNA]</scope>
    <source>
        <strain>M1</strain>
    </source>
</reference>
<reference key="2">
    <citation type="journal article" date="2023" name="Appl. Microbiol. Biotechnol.">
        <title>Mining an O-methyltransferase for de novo biosynthesis of physcion in Aspergillus nidulans.</title>
        <authorList>
            <person name="Yao Y."/>
            <person name="Yang E."/>
            <person name="Pan Y."/>
            <person name="Shu X."/>
            <person name="Liu G."/>
        </authorList>
    </citation>
    <scope>FUNCTION</scope>
    <scope>CATALYTIC ACTIVITY</scope>
</reference>
<dbReference type="EC" id="2.1.1.-" evidence="1"/>
<dbReference type="EMBL" id="AP024417">
    <property type="protein sequence ID" value="BCR85519.1"/>
    <property type="molecule type" value="Genomic_DNA"/>
</dbReference>
<dbReference type="Proteomes" id="UP000637239">
    <property type="component" value="Chromosome 2"/>
</dbReference>
<dbReference type="GO" id="GO:0008168">
    <property type="term" value="F:methyltransferase activity"/>
    <property type="evidence" value="ECO:0007669"/>
    <property type="project" value="UniProtKB-KW"/>
</dbReference>
<dbReference type="GO" id="GO:0032259">
    <property type="term" value="P:methylation"/>
    <property type="evidence" value="ECO:0007669"/>
    <property type="project" value="UniProtKB-KW"/>
</dbReference>
<dbReference type="CDD" id="cd02440">
    <property type="entry name" value="AdoMet_MTases"/>
    <property type="match status" value="1"/>
</dbReference>
<dbReference type="Gene3D" id="3.40.50.150">
    <property type="entry name" value="Vaccinia Virus protein VP39"/>
    <property type="match status" value="1"/>
</dbReference>
<dbReference type="InterPro" id="IPR013217">
    <property type="entry name" value="Methyltransf_12"/>
</dbReference>
<dbReference type="InterPro" id="IPR016584">
    <property type="entry name" value="MeTrfase_VrtF"/>
</dbReference>
<dbReference type="InterPro" id="IPR029063">
    <property type="entry name" value="SAM-dependent_MTases_sf"/>
</dbReference>
<dbReference type="Pfam" id="PF08242">
    <property type="entry name" value="Methyltransf_12"/>
    <property type="match status" value="1"/>
</dbReference>
<dbReference type="PIRSF" id="PIRSF011491">
    <property type="entry name" value="Mtase_YbcY_prd"/>
    <property type="match status" value="1"/>
</dbReference>
<dbReference type="SUPFAM" id="SSF53335">
    <property type="entry name" value="S-adenosyl-L-methionine-dependent methyltransferases"/>
    <property type="match status" value="1"/>
</dbReference>
<name>ACOMT_ASPCH</name>
<keyword id="KW-0489">Methyltransferase</keyword>
<keyword id="KW-1185">Reference proteome</keyword>
<keyword id="KW-0949">S-adenosyl-L-methionine</keyword>
<keyword id="KW-0808">Transferase</keyword>
<proteinExistence type="evidence at protein level"/>
<organism>
    <name type="scientific">Aspergillus chevalieri</name>
    <name type="common">Eurotium chevalieri</name>
    <dbReference type="NCBI Taxonomy" id="182096"/>
    <lineage>
        <taxon>Eukaryota</taxon>
        <taxon>Fungi</taxon>
        <taxon>Dikarya</taxon>
        <taxon>Ascomycota</taxon>
        <taxon>Pezizomycotina</taxon>
        <taxon>Eurotiomycetes</taxon>
        <taxon>Eurotiomycetidae</taxon>
        <taxon>Eurotiales</taxon>
        <taxon>Aspergillaceae</taxon>
        <taxon>Aspergillus</taxon>
        <taxon>Aspergillus subgen. Aspergillus</taxon>
    </lineage>
</organism>
<protein>
    <recommendedName>
        <fullName evidence="2">Physcion biosynthesis cluster O-methyltransferase</fullName>
        <shortName evidence="2">OMT</shortName>
        <ecNumber evidence="1">2.1.1.-</ecNumber>
    </recommendedName>
</protein>